<sequence length="174" mass="18983">MAIVAVYPGTFDPLTNGHADLVQRSCRLFDRLIVAVAAYPSPSKRPAFTLDERLALAREVLKDMPGVEVEAFDTLLVDFVRARGATVILRGLRAVSDFEHEFQLASMNRQLIEEVETVFLTPAEQHAYISSSLVREVAALGGDVTRFVPPVVARALARRYSGPNRDGDGDGQGG</sequence>
<organism>
    <name type="scientific">Alkalilimnicola ehrlichii (strain ATCC BAA-1101 / DSM 17681 / MLHE-1)</name>
    <dbReference type="NCBI Taxonomy" id="187272"/>
    <lineage>
        <taxon>Bacteria</taxon>
        <taxon>Pseudomonadati</taxon>
        <taxon>Pseudomonadota</taxon>
        <taxon>Gammaproteobacteria</taxon>
        <taxon>Chromatiales</taxon>
        <taxon>Ectothiorhodospiraceae</taxon>
        <taxon>Alkalilimnicola</taxon>
    </lineage>
</organism>
<accession>Q0A592</accession>
<reference key="1">
    <citation type="submission" date="2006-08" db="EMBL/GenBank/DDBJ databases">
        <title>Complete sequence of Alkalilimnicola ehrilichei MLHE-1.</title>
        <authorList>
            <person name="Copeland A."/>
            <person name="Lucas S."/>
            <person name="Lapidus A."/>
            <person name="Barry K."/>
            <person name="Detter J.C."/>
            <person name="Glavina del Rio T."/>
            <person name="Hammon N."/>
            <person name="Israni S."/>
            <person name="Dalin E."/>
            <person name="Tice H."/>
            <person name="Pitluck S."/>
            <person name="Sims D."/>
            <person name="Brettin T."/>
            <person name="Bruce D."/>
            <person name="Han C."/>
            <person name="Tapia R."/>
            <person name="Gilna P."/>
            <person name="Schmutz J."/>
            <person name="Larimer F."/>
            <person name="Land M."/>
            <person name="Hauser L."/>
            <person name="Kyrpides N."/>
            <person name="Mikhailova N."/>
            <person name="Oremland R.S."/>
            <person name="Hoeft S.E."/>
            <person name="Switzer-Blum J."/>
            <person name="Kulp T."/>
            <person name="King G."/>
            <person name="Tabita R."/>
            <person name="Witte B."/>
            <person name="Santini J.M."/>
            <person name="Basu P."/>
            <person name="Hollibaugh J.T."/>
            <person name="Xie G."/>
            <person name="Stolz J.F."/>
            <person name="Richardson P."/>
        </authorList>
    </citation>
    <scope>NUCLEOTIDE SEQUENCE [LARGE SCALE GENOMIC DNA]</scope>
    <source>
        <strain>ATCC BAA-1101 / DSM 17681 / MLHE-1</strain>
    </source>
</reference>
<evidence type="ECO:0000255" key="1">
    <source>
        <dbReference type="HAMAP-Rule" id="MF_00151"/>
    </source>
</evidence>
<keyword id="KW-0067">ATP-binding</keyword>
<keyword id="KW-0173">Coenzyme A biosynthesis</keyword>
<keyword id="KW-0963">Cytoplasm</keyword>
<keyword id="KW-0460">Magnesium</keyword>
<keyword id="KW-0547">Nucleotide-binding</keyword>
<keyword id="KW-0548">Nucleotidyltransferase</keyword>
<keyword id="KW-1185">Reference proteome</keyword>
<keyword id="KW-0808">Transferase</keyword>
<dbReference type="EC" id="2.7.7.3" evidence="1"/>
<dbReference type="EMBL" id="CP000453">
    <property type="protein sequence ID" value="ABI57995.1"/>
    <property type="molecule type" value="Genomic_DNA"/>
</dbReference>
<dbReference type="RefSeq" id="WP_011630388.1">
    <property type="nucleotide sequence ID" value="NC_008340.1"/>
</dbReference>
<dbReference type="SMR" id="Q0A592"/>
<dbReference type="KEGG" id="aeh:Mlg_2655"/>
<dbReference type="eggNOG" id="COG0669">
    <property type="taxonomic scope" value="Bacteria"/>
</dbReference>
<dbReference type="HOGENOM" id="CLU_100149_0_1_6"/>
<dbReference type="OrthoDB" id="9806661at2"/>
<dbReference type="UniPathway" id="UPA00241">
    <property type="reaction ID" value="UER00355"/>
</dbReference>
<dbReference type="Proteomes" id="UP000001962">
    <property type="component" value="Chromosome"/>
</dbReference>
<dbReference type="GO" id="GO:0005737">
    <property type="term" value="C:cytoplasm"/>
    <property type="evidence" value="ECO:0007669"/>
    <property type="project" value="UniProtKB-SubCell"/>
</dbReference>
<dbReference type="GO" id="GO:0005524">
    <property type="term" value="F:ATP binding"/>
    <property type="evidence" value="ECO:0007669"/>
    <property type="project" value="UniProtKB-KW"/>
</dbReference>
<dbReference type="GO" id="GO:0004595">
    <property type="term" value="F:pantetheine-phosphate adenylyltransferase activity"/>
    <property type="evidence" value="ECO:0007669"/>
    <property type="project" value="UniProtKB-UniRule"/>
</dbReference>
<dbReference type="GO" id="GO:0015937">
    <property type="term" value="P:coenzyme A biosynthetic process"/>
    <property type="evidence" value="ECO:0007669"/>
    <property type="project" value="UniProtKB-UniRule"/>
</dbReference>
<dbReference type="CDD" id="cd02163">
    <property type="entry name" value="PPAT"/>
    <property type="match status" value="1"/>
</dbReference>
<dbReference type="Gene3D" id="3.40.50.620">
    <property type="entry name" value="HUPs"/>
    <property type="match status" value="1"/>
</dbReference>
<dbReference type="HAMAP" id="MF_00151">
    <property type="entry name" value="PPAT_bact"/>
    <property type="match status" value="1"/>
</dbReference>
<dbReference type="InterPro" id="IPR004821">
    <property type="entry name" value="Cyt_trans-like"/>
</dbReference>
<dbReference type="InterPro" id="IPR001980">
    <property type="entry name" value="PPAT"/>
</dbReference>
<dbReference type="InterPro" id="IPR014729">
    <property type="entry name" value="Rossmann-like_a/b/a_fold"/>
</dbReference>
<dbReference type="NCBIfam" id="TIGR01510">
    <property type="entry name" value="coaD_prev_kdtB"/>
    <property type="match status" value="1"/>
</dbReference>
<dbReference type="NCBIfam" id="TIGR00125">
    <property type="entry name" value="cyt_tran_rel"/>
    <property type="match status" value="1"/>
</dbReference>
<dbReference type="PANTHER" id="PTHR21342">
    <property type="entry name" value="PHOSPHOPANTETHEINE ADENYLYLTRANSFERASE"/>
    <property type="match status" value="1"/>
</dbReference>
<dbReference type="PANTHER" id="PTHR21342:SF1">
    <property type="entry name" value="PHOSPHOPANTETHEINE ADENYLYLTRANSFERASE"/>
    <property type="match status" value="1"/>
</dbReference>
<dbReference type="Pfam" id="PF01467">
    <property type="entry name" value="CTP_transf_like"/>
    <property type="match status" value="1"/>
</dbReference>
<dbReference type="PRINTS" id="PR01020">
    <property type="entry name" value="LPSBIOSNTHSS"/>
</dbReference>
<dbReference type="SUPFAM" id="SSF52374">
    <property type="entry name" value="Nucleotidylyl transferase"/>
    <property type="match status" value="1"/>
</dbReference>
<protein>
    <recommendedName>
        <fullName evidence="1">Phosphopantetheine adenylyltransferase</fullName>
        <ecNumber evidence="1">2.7.7.3</ecNumber>
    </recommendedName>
    <alternativeName>
        <fullName evidence="1">Dephospho-CoA pyrophosphorylase</fullName>
    </alternativeName>
    <alternativeName>
        <fullName evidence="1">Pantetheine-phosphate adenylyltransferase</fullName>
        <shortName evidence="1">PPAT</shortName>
    </alternativeName>
</protein>
<name>COAD_ALKEH</name>
<gene>
    <name evidence="1" type="primary">coaD</name>
    <name type="ordered locus">Mlg_2655</name>
</gene>
<feature type="chain" id="PRO_1000096757" description="Phosphopantetheine adenylyltransferase">
    <location>
        <begin position="1"/>
        <end position="174"/>
    </location>
</feature>
<feature type="binding site" evidence="1">
    <location>
        <begin position="10"/>
        <end position="11"/>
    </location>
    <ligand>
        <name>ATP</name>
        <dbReference type="ChEBI" id="CHEBI:30616"/>
    </ligand>
</feature>
<feature type="binding site" evidence="1">
    <location>
        <position position="10"/>
    </location>
    <ligand>
        <name>substrate</name>
    </ligand>
</feature>
<feature type="binding site" evidence="1">
    <location>
        <position position="18"/>
    </location>
    <ligand>
        <name>ATP</name>
        <dbReference type="ChEBI" id="CHEBI:30616"/>
    </ligand>
</feature>
<feature type="binding site" evidence="1">
    <location>
        <position position="44"/>
    </location>
    <ligand>
        <name>substrate</name>
    </ligand>
</feature>
<feature type="binding site" evidence="1">
    <location>
        <position position="76"/>
    </location>
    <ligand>
        <name>substrate</name>
    </ligand>
</feature>
<feature type="binding site" evidence="1">
    <location>
        <position position="90"/>
    </location>
    <ligand>
        <name>substrate</name>
    </ligand>
</feature>
<feature type="binding site" evidence="1">
    <location>
        <begin position="91"/>
        <end position="93"/>
    </location>
    <ligand>
        <name>ATP</name>
        <dbReference type="ChEBI" id="CHEBI:30616"/>
    </ligand>
</feature>
<feature type="binding site" evidence="1">
    <location>
        <position position="101"/>
    </location>
    <ligand>
        <name>ATP</name>
        <dbReference type="ChEBI" id="CHEBI:30616"/>
    </ligand>
</feature>
<feature type="binding site" evidence="1">
    <location>
        <begin position="126"/>
        <end position="132"/>
    </location>
    <ligand>
        <name>ATP</name>
        <dbReference type="ChEBI" id="CHEBI:30616"/>
    </ligand>
</feature>
<feature type="site" description="Transition state stabilizer" evidence="1">
    <location>
        <position position="18"/>
    </location>
</feature>
<comment type="function">
    <text evidence="1">Reversibly transfers an adenylyl group from ATP to 4'-phosphopantetheine, yielding dephospho-CoA (dPCoA) and pyrophosphate.</text>
</comment>
<comment type="catalytic activity">
    <reaction evidence="1">
        <text>(R)-4'-phosphopantetheine + ATP + H(+) = 3'-dephospho-CoA + diphosphate</text>
        <dbReference type="Rhea" id="RHEA:19801"/>
        <dbReference type="ChEBI" id="CHEBI:15378"/>
        <dbReference type="ChEBI" id="CHEBI:30616"/>
        <dbReference type="ChEBI" id="CHEBI:33019"/>
        <dbReference type="ChEBI" id="CHEBI:57328"/>
        <dbReference type="ChEBI" id="CHEBI:61723"/>
        <dbReference type="EC" id="2.7.7.3"/>
    </reaction>
</comment>
<comment type="cofactor">
    <cofactor evidence="1">
        <name>Mg(2+)</name>
        <dbReference type="ChEBI" id="CHEBI:18420"/>
    </cofactor>
</comment>
<comment type="pathway">
    <text evidence="1">Cofactor biosynthesis; coenzyme A biosynthesis; CoA from (R)-pantothenate: step 4/5.</text>
</comment>
<comment type="subunit">
    <text evidence="1">Homohexamer.</text>
</comment>
<comment type="subcellular location">
    <subcellularLocation>
        <location evidence="1">Cytoplasm</location>
    </subcellularLocation>
</comment>
<comment type="similarity">
    <text evidence="1">Belongs to the bacterial CoaD family.</text>
</comment>
<proteinExistence type="inferred from homology"/>